<name>Y515_BACC2</name>
<keyword id="KW-0378">Hydrolase</keyword>
<evidence type="ECO:0000255" key="1">
    <source>
        <dbReference type="HAMAP-Rule" id="MF_00457"/>
    </source>
</evidence>
<reference key="1">
    <citation type="submission" date="2008-10" db="EMBL/GenBank/DDBJ databases">
        <title>Genome sequence of Bacillus cereus G9842.</title>
        <authorList>
            <person name="Dodson R.J."/>
            <person name="Durkin A.S."/>
            <person name="Rosovitz M.J."/>
            <person name="Rasko D.A."/>
            <person name="Hoffmaster A."/>
            <person name="Ravel J."/>
            <person name="Sutton G."/>
        </authorList>
    </citation>
    <scope>NUCLEOTIDE SEQUENCE [LARGE SCALE GENOMIC DNA]</scope>
    <source>
        <strain>G9842</strain>
    </source>
</reference>
<organism>
    <name type="scientific">Bacillus cereus (strain G9842)</name>
    <dbReference type="NCBI Taxonomy" id="405531"/>
    <lineage>
        <taxon>Bacteria</taxon>
        <taxon>Bacillati</taxon>
        <taxon>Bacillota</taxon>
        <taxon>Bacilli</taxon>
        <taxon>Bacillales</taxon>
        <taxon>Bacillaceae</taxon>
        <taxon>Bacillus</taxon>
        <taxon>Bacillus cereus group</taxon>
    </lineage>
</organism>
<feature type="chain" id="PRO_1000197810" description="UPF0173 metal-dependent hydrolase BCG9842_B0515">
    <location>
        <begin position="1"/>
        <end position="227"/>
    </location>
</feature>
<protein>
    <recommendedName>
        <fullName evidence="1">UPF0173 metal-dependent hydrolase BCG9842_B0515</fullName>
    </recommendedName>
</protein>
<sequence>MKVSYHGHSVVKIEANGKVILIDPFLTGNPKTDLKAEDVKVDAILLSHGHGDHVGDTVELAKKNNAVVVAPFELATFLSWQGVNTHPMHIGGSHEFDFGKVKFTQAFHGSSYIDEANKTITYTGMPAGILFTAEEKTVYHAGDTALFSDMKLIGELNKVDLAFLPIGDNFTMGPEDAVLAAKWINSKTVVPMHYNTFPVIEQDPYQFVEKLQNCTGKVLEAGESITL</sequence>
<accession>B7IK11</accession>
<dbReference type="EMBL" id="CP001186">
    <property type="protein sequence ID" value="ACK93333.1"/>
    <property type="molecule type" value="Genomic_DNA"/>
</dbReference>
<dbReference type="RefSeq" id="WP_000868923.1">
    <property type="nucleotide sequence ID" value="NC_011772.1"/>
</dbReference>
<dbReference type="SMR" id="B7IK11"/>
<dbReference type="KEGG" id="bcg:BCG9842_B0515"/>
<dbReference type="HOGENOM" id="CLU_070010_4_1_9"/>
<dbReference type="Proteomes" id="UP000006744">
    <property type="component" value="Chromosome"/>
</dbReference>
<dbReference type="GO" id="GO:0016787">
    <property type="term" value="F:hydrolase activity"/>
    <property type="evidence" value="ECO:0007669"/>
    <property type="project" value="UniProtKB-UniRule"/>
</dbReference>
<dbReference type="Gene3D" id="3.60.15.10">
    <property type="entry name" value="Ribonuclease Z/Hydroxyacylglutathione hydrolase-like"/>
    <property type="match status" value="1"/>
</dbReference>
<dbReference type="HAMAP" id="MF_00457">
    <property type="entry name" value="UPF0173"/>
    <property type="match status" value="1"/>
</dbReference>
<dbReference type="InterPro" id="IPR001279">
    <property type="entry name" value="Metallo-B-lactamas"/>
</dbReference>
<dbReference type="InterPro" id="IPR036866">
    <property type="entry name" value="RibonucZ/Hydroxyglut_hydro"/>
</dbReference>
<dbReference type="InterPro" id="IPR022877">
    <property type="entry name" value="UPF0173"/>
</dbReference>
<dbReference type="InterPro" id="IPR050114">
    <property type="entry name" value="UPF0173_UPF0282_UlaG_hydrolase"/>
</dbReference>
<dbReference type="NCBIfam" id="NF001911">
    <property type="entry name" value="PRK00685.1"/>
    <property type="match status" value="1"/>
</dbReference>
<dbReference type="PANTHER" id="PTHR43546:SF3">
    <property type="entry name" value="UPF0173 METAL-DEPENDENT HYDROLASE MJ1163"/>
    <property type="match status" value="1"/>
</dbReference>
<dbReference type="PANTHER" id="PTHR43546">
    <property type="entry name" value="UPF0173 METAL-DEPENDENT HYDROLASE MJ1163-RELATED"/>
    <property type="match status" value="1"/>
</dbReference>
<dbReference type="Pfam" id="PF12706">
    <property type="entry name" value="Lactamase_B_2"/>
    <property type="match status" value="1"/>
</dbReference>
<dbReference type="SMART" id="SM00849">
    <property type="entry name" value="Lactamase_B"/>
    <property type="match status" value="1"/>
</dbReference>
<dbReference type="SUPFAM" id="SSF56281">
    <property type="entry name" value="Metallo-hydrolase/oxidoreductase"/>
    <property type="match status" value="1"/>
</dbReference>
<comment type="similarity">
    <text evidence="1">Belongs to the UPF0173 family.</text>
</comment>
<gene>
    <name type="ordered locus">BCG9842_B0515</name>
</gene>
<proteinExistence type="inferred from homology"/>